<name>AROB_PYRFU</name>
<keyword id="KW-0028">Amino-acid biosynthesis</keyword>
<keyword id="KW-0057">Aromatic amino acid biosynthesis</keyword>
<keyword id="KW-0170">Cobalt</keyword>
<keyword id="KW-0963">Cytoplasm</keyword>
<keyword id="KW-0456">Lyase</keyword>
<keyword id="KW-0479">Metal-binding</keyword>
<keyword id="KW-0520">NAD</keyword>
<keyword id="KW-0547">Nucleotide-binding</keyword>
<keyword id="KW-1185">Reference proteome</keyword>
<keyword id="KW-0862">Zinc</keyword>
<reference key="1">
    <citation type="journal article" date="1999" name="Genetics">
        <title>Divergence of the hyperthermophilic archaea Pyrococcus furiosus and P. horikoshii inferred from complete genomic sequences.</title>
        <authorList>
            <person name="Maeder D.L."/>
            <person name="Weiss R.B."/>
            <person name="Dunn D.M."/>
            <person name="Cherry J.L."/>
            <person name="Gonzalez J.M."/>
            <person name="DiRuggiero J."/>
            <person name="Robb F.T."/>
        </authorList>
    </citation>
    <scope>NUCLEOTIDE SEQUENCE [LARGE SCALE GENOMIC DNA]</scope>
    <source>
        <strain>ATCC 43587 / DSM 3638 / JCM 8422 / Vc1</strain>
    </source>
</reference>
<gene>
    <name evidence="1" type="primary">aroB</name>
    <name type="ordered locus">PF1691</name>
</gene>
<organism>
    <name type="scientific">Pyrococcus furiosus (strain ATCC 43587 / DSM 3638 / JCM 8422 / Vc1)</name>
    <dbReference type="NCBI Taxonomy" id="186497"/>
    <lineage>
        <taxon>Archaea</taxon>
        <taxon>Methanobacteriati</taxon>
        <taxon>Methanobacteriota</taxon>
        <taxon>Thermococci</taxon>
        <taxon>Thermococcales</taxon>
        <taxon>Thermococcaceae</taxon>
        <taxon>Pyrococcus</taxon>
    </lineage>
</organism>
<protein>
    <recommendedName>
        <fullName evidence="1">3-dehydroquinate synthase</fullName>
        <shortName evidence="1">DHQS</shortName>
        <ecNumber evidence="1">4.2.3.4</ecNumber>
    </recommendedName>
</protein>
<evidence type="ECO:0000255" key="1">
    <source>
        <dbReference type="HAMAP-Rule" id="MF_00110"/>
    </source>
</evidence>
<feature type="chain" id="PRO_0000140819" description="3-dehydroquinate synthase">
    <location>
        <begin position="1"/>
        <end position="335"/>
    </location>
</feature>
<feature type="binding site" evidence="1">
    <location>
        <begin position="56"/>
        <end position="61"/>
    </location>
    <ligand>
        <name>NAD(+)</name>
        <dbReference type="ChEBI" id="CHEBI:57540"/>
    </ligand>
</feature>
<feature type="binding site" evidence="1">
    <location>
        <begin position="90"/>
        <end position="94"/>
    </location>
    <ligand>
        <name>NAD(+)</name>
        <dbReference type="ChEBI" id="CHEBI:57540"/>
    </ligand>
</feature>
<feature type="binding site" evidence="1">
    <location>
        <begin position="114"/>
        <end position="115"/>
    </location>
    <ligand>
        <name>NAD(+)</name>
        <dbReference type="ChEBI" id="CHEBI:57540"/>
    </ligand>
</feature>
<feature type="binding site" evidence="1">
    <location>
        <position position="127"/>
    </location>
    <ligand>
        <name>NAD(+)</name>
        <dbReference type="ChEBI" id="CHEBI:57540"/>
    </ligand>
</feature>
<feature type="binding site" evidence="1">
    <location>
        <position position="135"/>
    </location>
    <ligand>
        <name>NAD(+)</name>
        <dbReference type="ChEBI" id="CHEBI:57540"/>
    </ligand>
</feature>
<feature type="binding site" evidence="1">
    <location>
        <begin position="153"/>
        <end position="156"/>
    </location>
    <ligand>
        <name>NAD(+)</name>
        <dbReference type="ChEBI" id="CHEBI:57540"/>
    </ligand>
</feature>
<feature type="binding site" evidence="1">
    <location>
        <position position="168"/>
    </location>
    <ligand>
        <name>Zn(2+)</name>
        <dbReference type="ChEBI" id="CHEBI:29105"/>
    </ligand>
</feature>
<feature type="binding site" evidence="1">
    <location>
        <position position="227"/>
    </location>
    <ligand>
        <name>Zn(2+)</name>
        <dbReference type="ChEBI" id="CHEBI:29105"/>
    </ligand>
</feature>
<feature type="binding site" evidence="1">
    <location>
        <position position="243"/>
    </location>
    <ligand>
        <name>Zn(2+)</name>
        <dbReference type="ChEBI" id="CHEBI:29105"/>
    </ligand>
</feature>
<dbReference type="EC" id="4.2.3.4" evidence="1"/>
<dbReference type="EMBL" id="AE009950">
    <property type="protein sequence ID" value="AAL81815.1"/>
    <property type="molecule type" value="Genomic_DNA"/>
</dbReference>
<dbReference type="RefSeq" id="WP_011012837.1">
    <property type="nucleotide sequence ID" value="NZ_CP023154.1"/>
</dbReference>
<dbReference type="SMR" id="Q8U0A8"/>
<dbReference type="STRING" id="186497.PF1691"/>
<dbReference type="PaxDb" id="186497-PF1691"/>
<dbReference type="GeneID" id="41713522"/>
<dbReference type="KEGG" id="pfu:PF1691"/>
<dbReference type="PATRIC" id="fig|186497.12.peg.1759"/>
<dbReference type="eggNOG" id="arCOG00983">
    <property type="taxonomic scope" value="Archaea"/>
</dbReference>
<dbReference type="HOGENOM" id="CLU_001201_0_2_2"/>
<dbReference type="OrthoDB" id="21407at2157"/>
<dbReference type="PhylomeDB" id="Q8U0A8"/>
<dbReference type="BRENDA" id="4.2.3.4">
    <property type="organism ID" value="5243"/>
</dbReference>
<dbReference type="SABIO-RK" id="Q8U0A8"/>
<dbReference type="UniPathway" id="UPA00053">
    <property type="reaction ID" value="UER00085"/>
</dbReference>
<dbReference type="Proteomes" id="UP000001013">
    <property type="component" value="Chromosome"/>
</dbReference>
<dbReference type="GO" id="GO:0005737">
    <property type="term" value="C:cytoplasm"/>
    <property type="evidence" value="ECO:0007669"/>
    <property type="project" value="UniProtKB-SubCell"/>
</dbReference>
<dbReference type="GO" id="GO:0003856">
    <property type="term" value="F:3-dehydroquinate synthase activity"/>
    <property type="evidence" value="ECO:0007669"/>
    <property type="project" value="UniProtKB-UniRule"/>
</dbReference>
<dbReference type="GO" id="GO:0046872">
    <property type="term" value="F:metal ion binding"/>
    <property type="evidence" value="ECO:0007669"/>
    <property type="project" value="UniProtKB-KW"/>
</dbReference>
<dbReference type="GO" id="GO:0000166">
    <property type="term" value="F:nucleotide binding"/>
    <property type="evidence" value="ECO:0007669"/>
    <property type="project" value="UniProtKB-KW"/>
</dbReference>
<dbReference type="GO" id="GO:0008652">
    <property type="term" value="P:amino acid biosynthetic process"/>
    <property type="evidence" value="ECO:0007669"/>
    <property type="project" value="UniProtKB-KW"/>
</dbReference>
<dbReference type="GO" id="GO:0009073">
    <property type="term" value="P:aromatic amino acid family biosynthetic process"/>
    <property type="evidence" value="ECO:0007669"/>
    <property type="project" value="UniProtKB-KW"/>
</dbReference>
<dbReference type="GO" id="GO:0009423">
    <property type="term" value="P:chorismate biosynthetic process"/>
    <property type="evidence" value="ECO:0007669"/>
    <property type="project" value="UniProtKB-UniRule"/>
</dbReference>
<dbReference type="CDD" id="cd08195">
    <property type="entry name" value="DHQS"/>
    <property type="match status" value="1"/>
</dbReference>
<dbReference type="FunFam" id="3.40.50.1970:FF:000007">
    <property type="entry name" value="Pentafunctional AROM polypeptide"/>
    <property type="match status" value="1"/>
</dbReference>
<dbReference type="Gene3D" id="3.40.50.1970">
    <property type="match status" value="1"/>
</dbReference>
<dbReference type="Gene3D" id="1.20.1090.10">
    <property type="entry name" value="Dehydroquinate synthase-like - alpha domain"/>
    <property type="match status" value="1"/>
</dbReference>
<dbReference type="HAMAP" id="MF_00110">
    <property type="entry name" value="DHQ_synthase"/>
    <property type="match status" value="1"/>
</dbReference>
<dbReference type="InterPro" id="IPR050071">
    <property type="entry name" value="Dehydroquinate_synthase"/>
</dbReference>
<dbReference type="InterPro" id="IPR016037">
    <property type="entry name" value="DHQ_synth_AroB"/>
</dbReference>
<dbReference type="InterPro" id="IPR030963">
    <property type="entry name" value="DHQ_synth_fam"/>
</dbReference>
<dbReference type="InterPro" id="IPR030960">
    <property type="entry name" value="DHQS/DOIS_N"/>
</dbReference>
<dbReference type="InterPro" id="IPR056179">
    <property type="entry name" value="DHQS_C"/>
</dbReference>
<dbReference type="NCBIfam" id="TIGR01357">
    <property type="entry name" value="aroB"/>
    <property type="match status" value="1"/>
</dbReference>
<dbReference type="PANTHER" id="PTHR43622">
    <property type="entry name" value="3-DEHYDROQUINATE SYNTHASE"/>
    <property type="match status" value="1"/>
</dbReference>
<dbReference type="PANTHER" id="PTHR43622:SF1">
    <property type="entry name" value="3-DEHYDROQUINATE SYNTHASE"/>
    <property type="match status" value="1"/>
</dbReference>
<dbReference type="Pfam" id="PF01761">
    <property type="entry name" value="DHQ_synthase"/>
    <property type="match status" value="1"/>
</dbReference>
<dbReference type="Pfam" id="PF24621">
    <property type="entry name" value="DHQS_C"/>
    <property type="match status" value="1"/>
</dbReference>
<dbReference type="PIRSF" id="PIRSF001455">
    <property type="entry name" value="DHQ_synth"/>
    <property type="match status" value="1"/>
</dbReference>
<dbReference type="SUPFAM" id="SSF56796">
    <property type="entry name" value="Dehydroquinate synthase-like"/>
    <property type="match status" value="1"/>
</dbReference>
<proteinExistence type="inferred from homology"/>
<comment type="function">
    <text evidence="1">Catalyzes the conversion of 3-deoxy-D-arabino-heptulosonate 7-phosphate (DAHP) to dehydroquinate (DHQ).</text>
</comment>
<comment type="catalytic activity">
    <reaction evidence="1">
        <text>7-phospho-2-dehydro-3-deoxy-D-arabino-heptonate = 3-dehydroquinate + phosphate</text>
        <dbReference type="Rhea" id="RHEA:21968"/>
        <dbReference type="ChEBI" id="CHEBI:32364"/>
        <dbReference type="ChEBI" id="CHEBI:43474"/>
        <dbReference type="ChEBI" id="CHEBI:58394"/>
        <dbReference type="EC" id="4.2.3.4"/>
    </reaction>
</comment>
<comment type="cofactor">
    <cofactor evidence="1">
        <name>NAD(+)</name>
        <dbReference type="ChEBI" id="CHEBI:57540"/>
    </cofactor>
</comment>
<comment type="cofactor">
    <cofactor evidence="1">
        <name>Co(2+)</name>
        <dbReference type="ChEBI" id="CHEBI:48828"/>
    </cofactor>
    <cofactor evidence="1">
        <name>Zn(2+)</name>
        <dbReference type="ChEBI" id="CHEBI:29105"/>
    </cofactor>
    <text evidence="1">Binds 1 divalent metal cation per subunit. Can use either Co(2+) or Zn(2+).</text>
</comment>
<comment type="pathway">
    <text evidence="1">Metabolic intermediate biosynthesis; chorismate biosynthesis; chorismate from D-erythrose 4-phosphate and phosphoenolpyruvate: step 2/7.</text>
</comment>
<comment type="subcellular location">
    <subcellularLocation>
        <location evidence="1">Cytoplasm</location>
    </subcellularLocation>
</comment>
<comment type="similarity">
    <text evidence="1">Belongs to the sugar phosphate cyclases superfamily. Dehydroquinate synthase family.</text>
</comment>
<accession>Q8U0A8</accession>
<sequence>MEGIIFGDLSTLPDLLSSLSPYKVVVLTNTTLKELWLEEVLTWLKEFKPQTIVVPDGEKYKDLDTVRYIWEKLLEMGFTRRSLLIGLGGGVITDIAGFVASTYMRGTYLGLVPTTLLAQVDAAIGGKTGINFYGKNIIGTFYLPKFVLICRDFLKTLPMVEILNGLAEVVKYGILDKEVYNAIKTMNSPREIVEREDIIKKSVAVKLRIVEEDLKENGKRRVLNLGHTVGHAIEKISDYKIKHGFAVSMGLVVEAKIGEILYGFDSGKVVEILTKFGLPVKIPFDPYTTLQAMKIDKKAWYGKIVIVVPVEIGKANIEEVDEKIILQALEEAKNA</sequence>